<comment type="function">
    <text evidence="1">Involved in the biosynthesis of branched-chain amino acids (BCAA). Catalyzes an alkyl-migration followed by a ketol-acid reduction of (S)-2-acetolactate (S2AL) to yield (R)-2,3-dihydroxy-isovalerate. In the isomerase reaction, S2AL is rearranged via a Mg-dependent methyl migration to produce 3-hydroxy-3-methyl-2-ketobutyrate (HMKB). In the reductase reaction, this 2-ketoacid undergoes a metal-dependent reduction by NADPH to yield (R)-2,3-dihydroxy-isovalerate.</text>
</comment>
<comment type="catalytic activity">
    <reaction evidence="1">
        <text>(2R)-2,3-dihydroxy-3-methylbutanoate + NADP(+) = (2S)-2-acetolactate + NADPH + H(+)</text>
        <dbReference type="Rhea" id="RHEA:22068"/>
        <dbReference type="ChEBI" id="CHEBI:15378"/>
        <dbReference type="ChEBI" id="CHEBI:49072"/>
        <dbReference type="ChEBI" id="CHEBI:57783"/>
        <dbReference type="ChEBI" id="CHEBI:58349"/>
        <dbReference type="ChEBI" id="CHEBI:58476"/>
        <dbReference type="EC" id="1.1.1.86"/>
    </reaction>
</comment>
<comment type="catalytic activity">
    <reaction evidence="1">
        <text>(2R,3R)-2,3-dihydroxy-3-methylpentanoate + NADP(+) = (S)-2-ethyl-2-hydroxy-3-oxobutanoate + NADPH + H(+)</text>
        <dbReference type="Rhea" id="RHEA:13493"/>
        <dbReference type="ChEBI" id="CHEBI:15378"/>
        <dbReference type="ChEBI" id="CHEBI:49256"/>
        <dbReference type="ChEBI" id="CHEBI:49258"/>
        <dbReference type="ChEBI" id="CHEBI:57783"/>
        <dbReference type="ChEBI" id="CHEBI:58349"/>
        <dbReference type="EC" id="1.1.1.86"/>
    </reaction>
</comment>
<comment type="cofactor">
    <cofactor evidence="1">
        <name>Mg(2+)</name>
        <dbReference type="ChEBI" id="CHEBI:18420"/>
    </cofactor>
    <text evidence="1">Binds 2 magnesium ions per subunit.</text>
</comment>
<comment type="pathway">
    <text evidence="1">Amino-acid biosynthesis; L-isoleucine biosynthesis; L-isoleucine from 2-oxobutanoate: step 2/4.</text>
</comment>
<comment type="pathway">
    <text evidence="1">Amino-acid biosynthesis; L-valine biosynthesis; L-valine from pyruvate: step 2/4.</text>
</comment>
<comment type="similarity">
    <text evidence="1">Belongs to the ketol-acid reductoisomerase family.</text>
</comment>
<name>ILVC_CHRVO</name>
<reference key="1">
    <citation type="journal article" date="2003" name="Proc. Natl. Acad. Sci. U.S.A.">
        <title>The complete genome sequence of Chromobacterium violaceum reveals remarkable and exploitable bacterial adaptability.</title>
        <authorList>
            <person name="Vasconcelos A.T.R."/>
            <person name="de Almeida D.F."/>
            <person name="Hungria M."/>
            <person name="Guimaraes C.T."/>
            <person name="Antonio R.V."/>
            <person name="Almeida F.C."/>
            <person name="de Almeida L.G.P."/>
            <person name="de Almeida R."/>
            <person name="Alves-Gomes J.A."/>
            <person name="Andrade E.M."/>
            <person name="Araripe J."/>
            <person name="de Araujo M.F.F."/>
            <person name="Astolfi-Filho S."/>
            <person name="Azevedo V."/>
            <person name="Baptista A.J."/>
            <person name="Bataus L.A.M."/>
            <person name="Batista J.S."/>
            <person name="Belo A."/>
            <person name="van den Berg C."/>
            <person name="Bogo M."/>
            <person name="Bonatto S."/>
            <person name="Bordignon J."/>
            <person name="Brigido M.M."/>
            <person name="Brito C.A."/>
            <person name="Brocchi M."/>
            <person name="Burity H.A."/>
            <person name="Camargo A.A."/>
            <person name="Cardoso D.D.P."/>
            <person name="Carneiro N.P."/>
            <person name="Carraro D.M."/>
            <person name="Carvalho C.M.B."/>
            <person name="Cascardo J.C.M."/>
            <person name="Cavada B.S."/>
            <person name="Chueire L.M.O."/>
            <person name="Creczynski-Pasa T.B."/>
            <person name="Cunha-Junior N.C."/>
            <person name="Fagundes N."/>
            <person name="Falcao C.L."/>
            <person name="Fantinatti F."/>
            <person name="Farias I.P."/>
            <person name="Felipe M.S.S."/>
            <person name="Ferrari L.P."/>
            <person name="Ferro J.A."/>
            <person name="Ferro M.I.T."/>
            <person name="Franco G.R."/>
            <person name="Freitas N.S.A."/>
            <person name="Furlan L.R."/>
            <person name="Gazzinelli R.T."/>
            <person name="Gomes E.A."/>
            <person name="Goncalves P.R."/>
            <person name="Grangeiro T.B."/>
            <person name="Grattapaglia D."/>
            <person name="Grisard E.C."/>
            <person name="Hanna E.S."/>
            <person name="Jardim S.N."/>
            <person name="Laurino J."/>
            <person name="Leoi L.C.T."/>
            <person name="Lima L.F.A."/>
            <person name="Loureiro M.F."/>
            <person name="Lyra M.C.C.P."/>
            <person name="Madeira H.M.F."/>
            <person name="Manfio G.P."/>
            <person name="Maranhao A.Q."/>
            <person name="Martins W.S."/>
            <person name="di Mauro S.M.Z."/>
            <person name="de Medeiros S.R.B."/>
            <person name="Meissner R.V."/>
            <person name="Moreira M.A.M."/>
            <person name="Nascimento F.F."/>
            <person name="Nicolas M.F."/>
            <person name="Oliveira J.G."/>
            <person name="Oliveira S.C."/>
            <person name="Paixao R.F.C."/>
            <person name="Parente J.A."/>
            <person name="Pedrosa F.O."/>
            <person name="Pena S.D.J."/>
            <person name="Pereira J.O."/>
            <person name="Pereira M."/>
            <person name="Pinto L.S.R.C."/>
            <person name="Pinto L.S."/>
            <person name="Porto J.I.R."/>
            <person name="Potrich D.P."/>
            <person name="Ramalho-Neto C.E."/>
            <person name="Reis A.M.M."/>
            <person name="Rigo L.U."/>
            <person name="Rondinelli E."/>
            <person name="Santos E.B.P."/>
            <person name="Santos F.R."/>
            <person name="Schneider M.P.C."/>
            <person name="Seuanez H.N."/>
            <person name="Silva A.M.R."/>
            <person name="da Silva A.L.C."/>
            <person name="Silva D.W."/>
            <person name="Silva R."/>
            <person name="Simoes I.C."/>
            <person name="Simon D."/>
            <person name="Soares C.M.A."/>
            <person name="Soares R.B.A."/>
            <person name="Souza E.M."/>
            <person name="Souza K.R.L."/>
            <person name="Souza R.C."/>
            <person name="Steffens M.B.R."/>
            <person name="Steindel M."/>
            <person name="Teixeira S.R."/>
            <person name="Urmenyi T."/>
            <person name="Vettore A."/>
            <person name="Wassem R."/>
            <person name="Zaha A."/>
            <person name="Simpson A.J.G."/>
        </authorList>
    </citation>
    <scope>NUCLEOTIDE SEQUENCE [LARGE SCALE GENOMIC DNA]</scope>
    <source>
        <strain>ATCC 12472 / DSM 30191 / JCM 1249 / CCUG 213 / NBRC 12614 / NCIMB 9131 / NCTC 9757 / MK</strain>
    </source>
</reference>
<keyword id="KW-0028">Amino-acid biosynthesis</keyword>
<keyword id="KW-0100">Branched-chain amino acid biosynthesis</keyword>
<keyword id="KW-0460">Magnesium</keyword>
<keyword id="KW-0479">Metal-binding</keyword>
<keyword id="KW-0521">NADP</keyword>
<keyword id="KW-0560">Oxidoreductase</keyword>
<keyword id="KW-1185">Reference proteome</keyword>
<organism>
    <name type="scientific">Chromobacterium violaceum (strain ATCC 12472 / DSM 30191 / JCM 1249 / CCUG 213 / NBRC 12614 / NCIMB 9131 / NCTC 9757 / MK)</name>
    <dbReference type="NCBI Taxonomy" id="243365"/>
    <lineage>
        <taxon>Bacteria</taxon>
        <taxon>Pseudomonadati</taxon>
        <taxon>Pseudomonadota</taxon>
        <taxon>Betaproteobacteria</taxon>
        <taxon>Neisseriales</taxon>
        <taxon>Chromobacteriaceae</taxon>
        <taxon>Chromobacterium</taxon>
    </lineage>
</organism>
<protein>
    <recommendedName>
        <fullName evidence="1">Ketol-acid reductoisomerase (NADP(+))</fullName>
        <shortName evidence="1">KARI</shortName>
        <ecNumber evidence="1">1.1.1.86</ecNumber>
    </recommendedName>
    <alternativeName>
        <fullName evidence="1">Acetohydroxy-acid isomeroreductase</fullName>
        <shortName evidence="1">AHIR</shortName>
    </alternativeName>
    <alternativeName>
        <fullName evidence="1">Alpha-keto-beta-hydroxylacyl reductoisomerase</fullName>
    </alternativeName>
    <alternativeName>
        <fullName evidence="1">Ketol-acid reductoisomerase type 1</fullName>
    </alternativeName>
    <alternativeName>
        <fullName evidence="1">Ketol-acid reductoisomerase type I</fullName>
    </alternativeName>
</protein>
<sequence length="338" mass="36638">MKVYYDKDADLSIIKGKKVAIIGYGSQGHAHAQNLKESGVDVIVGLRKDGASWKKAEAAGHKVKEVAEAVKKADVVMILLPDESQPEVYHKDIAPNLKKGAALAFAHGFNIHYNQIVPPADVDVIMVAPKGPGHTVRSEYLKGGGVPTLIAVYQDKTGKARDVALSYAAANGGTKGGVIETNFREETETDLFGEQAVLCGGAVELVKAGFETLVEAGYAPEMAYFECLHELKLIVDLMYEGGIANMNYSISNNAEYGEYVTGPEVVTAATKEAMKKALYRIQSGEYAKMFILEGKTNYPSMTARRRLTAAHPIEKVGAELRAMMPWIAKNKLVDQSKN</sequence>
<feature type="chain" id="PRO_0000151302" description="Ketol-acid reductoisomerase (NADP(+))">
    <location>
        <begin position="1"/>
        <end position="338"/>
    </location>
</feature>
<feature type="domain" description="KARI N-terminal Rossmann" evidence="2">
    <location>
        <begin position="1"/>
        <end position="181"/>
    </location>
</feature>
<feature type="domain" description="KARI C-terminal knotted" evidence="3">
    <location>
        <begin position="182"/>
        <end position="327"/>
    </location>
</feature>
<feature type="active site" evidence="1">
    <location>
        <position position="107"/>
    </location>
</feature>
<feature type="binding site" evidence="1">
    <location>
        <begin position="24"/>
        <end position="27"/>
    </location>
    <ligand>
        <name>NADP(+)</name>
        <dbReference type="ChEBI" id="CHEBI:58349"/>
    </ligand>
</feature>
<feature type="binding site" evidence="1">
    <location>
        <position position="47"/>
    </location>
    <ligand>
        <name>NADP(+)</name>
        <dbReference type="ChEBI" id="CHEBI:58349"/>
    </ligand>
</feature>
<feature type="binding site" evidence="1">
    <location>
        <position position="52"/>
    </location>
    <ligand>
        <name>NADP(+)</name>
        <dbReference type="ChEBI" id="CHEBI:58349"/>
    </ligand>
</feature>
<feature type="binding site" evidence="1">
    <location>
        <begin position="82"/>
        <end position="85"/>
    </location>
    <ligand>
        <name>NADP(+)</name>
        <dbReference type="ChEBI" id="CHEBI:58349"/>
    </ligand>
</feature>
<feature type="binding site" evidence="1">
    <location>
        <position position="133"/>
    </location>
    <ligand>
        <name>NADP(+)</name>
        <dbReference type="ChEBI" id="CHEBI:58349"/>
    </ligand>
</feature>
<feature type="binding site" evidence="1">
    <location>
        <position position="190"/>
    </location>
    <ligand>
        <name>Mg(2+)</name>
        <dbReference type="ChEBI" id="CHEBI:18420"/>
        <label>1</label>
    </ligand>
</feature>
<feature type="binding site" evidence="1">
    <location>
        <position position="190"/>
    </location>
    <ligand>
        <name>Mg(2+)</name>
        <dbReference type="ChEBI" id="CHEBI:18420"/>
        <label>2</label>
    </ligand>
</feature>
<feature type="binding site" evidence="1">
    <location>
        <position position="194"/>
    </location>
    <ligand>
        <name>Mg(2+)</name>
        <dbReference type="ChEBI" id="CHEBI:18420"/>
        <label>1</label>
    </ligand>
</feature>
<feature type="binding site" evidence="1">
    <location>
        <position position="226"/>
    </location>
    <ligand>
        <name>Mg(2+)</name>
        <dbReference type="ChEBI" id="CHEBI:18420"/>
        <label>2</label>
    </ligand>
</feature>
<feature type="binding site" evidence="1">
    <location>
        <position position="230"/>
    </location>
    <ligand>
        <name>Mg(2+)</name>
        <dbReference type="ChEBI" id="CHEBI:18420"/>
        <label>2</label>
    </ligand>
</feature>
<feature type="binding site" evidence="1">
    <location>
        <position position="251"/>
    </location>
    <ligand>
        <name>substrate</name>
    </ligand>
</feature>
<dbReference type="EC" id="1.1.1.86" evidence="1"/>
<dbReference type="EMBL" id="AE016825">
    <property type="protein sequence ID" value="AAQ58264.1"/>
    <property type="molecule type" value="Genomic_DNA"/>
</dbReference>
<dbReference type="RefSeq" id="WP_011134143.1">
    <property type="nucleotide sequence ID" value="NC_005085.1"/>
</dbReference>
<dbReference type="SMR" id="Q7P0H9"/>
<dbReference type="STRING" id="243365.CV_0588"/>
<dbReference type="GeneID" id="66365507"/>
<dbReference type="KEGG" id="cvi:CV_0588"/>
<dbReference type="eggNOG" id="COG0059">
    <property type="taxonomic scope" value="Bacteria"/>
</dbReference>
<dbReference type="HOGENOM" id="CLU_033821_0_1_4"/>
<dbReference type="OrthoDB" id="9804088at2"/>
<dbReference type="UniPathway" id="UPA00047">
    <property type="reaction ID" value="UER00056"/>
</dbReference>
<dbReference type="UniPathway" id="UPA00049">
    <property type="reaction ID" value="UER00060"/>
</dbReference>
<dbReference type="Proteomes" id="UP000001424">
    <property type="component" value="Chromosome"/>
</dbReference>
<dbReference type="GO" id="GO:0005829">
    <property type="term" value="C:cytosol"/>
    <property type="evidence" value="ECO:0007669"/>
    <property type="project" value="TreeGrafter"/>
</dbReference>
<dbReference type="GO" id="GO:0004455">
    <property type="term" value="F:ketol-acid reductoisomerase activity"/>
    <property type="evidence" value="ECO:0007669"/>
    <property type="project" value="UniProtKB-UniRule"/>
</dbReference>
<dbReference type="GO" id="GO:0000287">
    <property type="term" value="F:magnesium ion binding"/>
    <property type="evidence" value="ECO:0007669"/>
    <property type="project" value="UniProtKB-UniRule"/>
</dbReference>
<dbReference type="GO" id="GO:0050661">
    <property type="term" value="F:NADP binding"/>
    <property type="evidence" value="ECO:0007669"/>
    <property type="project" value="InterPro"/>
</dbReference>
<dbReference type="GO" id="GO:0009097">
    <property type="term" value="P:isoleucine biosynthetic process"/>
    <property type="evidence" value="ECO:0007669"/>
    <property type="project" value="UniProtKB-UniRule"/>
</dbReference>
<dbReference type="GO" id="GO:0009099">
    <property type="term" value="P:L-valine biosynthetic process"/>
    <property type="evidence" value="ECO:0007669"/>
    <property type="project" value="UniProtKB-UniRule"/>
</dbReference>
<dbReference type="FunFam" id="3.40.50.720:FF:000023">
    <property type="entry name" value="Ketol-acid reductoisomerase (NADP(+))"/>
    <property type="match status" value="1"/>
</dbReference>
<dbReference type="Gene3D" id="6.10.240.10">
    <property type="match status" value="1"/>
</dbReference>
<dbReference type="Gene3D" id="3.40.50.720">
    <property type="entry name" value="NAD(P)-binding Rossmann-like Domain"/>
    <property type="match status" value="1"/>
</dbReference>
<dbReference type="HAMAP" id="MF_00435">
    <property type="entry name" value="IlvC"/>
    <property type="match status" value="1"/>
</dbReference>
<dbReference type="InterPro" id="IPR008927">
    <property type="entry name" value="6-PGluconate_DH-like_C_sf"/>
</dbReference>
<dbReference type="InterPro" id="IPR013023">
    <property type="entry name" value="KARI"/>
</dbReference>
<dbReference type="InterPro" id="IPR000506">
    <property type="entry name" value="KARI_C"/>
</dbReference>
<dbReference type="InterPro" id="IPR013116">
    <property type="entry name" value="KARI_N"/>
</dbReference>
<dbReference type="InterPro" id="IPR014359">
    <property type="entry name" value="KARI_prok"/>
</dbReference>
<dbReference type="InterPro" id="IPR036291">
    <property type="entry name" value="NAD(P)-bd_dom_sf"/>
</dbReference>
<dbReference type="NCBIfam" id="TIGR00465">
    <property type="entry name" value="ilvC"/>
    <property type="match status" value="1"/>
</dbReference>
<dbReference type="NCBIfam" id="NF004017">
    <property type="entry name" value="PRK05479.1"/>
    <property type="match status" value="1"/>
</dbReference>
<dbReference type="NCBIfam" id="NF009940">
    <property type="entry name" value="PRK13403.1"/>
    <property type="match status" value="1"/>
</dbReference>
<dbReference type="PANTHER" id="PTHR21371">
    <property type="entry name" value="KETOL-ACID REDUCTOISOMERASE, MITOCHONDRIAL"/>
    <property type="match status" value="1"/>
</dbReference>
<dbReference type="PANTHER" id="PTHR21371:SF1">
    <property type="entry name" value="KETOL-ACID REDUCTOISOMERASE, MITOCHONDRIAL"/>
    <property type="match status" value="1"/>
</dbReference>
<dbReference type="Pfam" id="PF01450">
    <property type="entry name" value="KARI_C"/>
    <property type="match status" value="1"/>
</dbReference>
<dbReference type="Pfam" id="PF07991">
    <property type="entry name" value="KARI_N"/>
    <property type="match status" value="1"/>
</dbReference>
<dbReference type="PIRSF" id="PIRSF000116">
    <property type="entry name" value="IlvC_gammaproteo"/>
    <property type="match status" value="1"/>
</dbReference>
<dbReference type="SUPFAM" id="SSF48179">
    <property type="entry name" value="6-phosphogluconate dehydrogenase C-terminal domain-like"/>
    <property type="match status" value="1"/>
</dbReference>
<dbReference type="SUPFAM" id="SSF51735">
    <property type="entry name" value="NAD(P)-binding Rossmann-fold domains"/>
    <property type="match status" value="1"/>
</dbReference>
<dbReference type="PROSITE" id="PS51851">
    <property type="entry name" value="KARI_C"/>
    <property type="match status" value="1"/>
</dbReference>
<dbReference type="PROSITE" id="PS51850">
    <property type="entry name" value="KARI_N"/>
    <property type="match status" value="1"/>
</dbReference>
<evidence type="ECO:0000255" key="1">
    <source>
        <dbReference type="HAMAP-Rule" id="MF_00435"/>
    </source>
</evidence>
<evidence type="ECO:0000255" key="2">
    <source>
        <dbReference type="PROSITE-ProRule" id="PRU01197"/>
    </source>
</evidence>
<evidence type="ECO:0000255" key="3">
    <source>
        <dbReference type="PROSITE-ProRule" id="PRU01198"/>
    </source>
</evidence>
<proteinExistence type="inferred from homology"/>
<accession>Q7P0H9</accession>
<gene>
    <name evidence="1" type="primary">ilvC</name>
    <name type="ordered locus">CV_0588</name>
</gene>